<protein>
    <recommendedName>
        <fullName evidence="1">Protein nucleotidyltransferase YdiU</fullName>
        <ecNumber evidence="1">2.7.7.-</ecNumber>
    </recommendedName>
    <alternativeName>
        <fullName evidence="1">Protein adenylyltransferase YdiU</fullName>
        <ecNumber evidence="1">2.7.7.108</ecNumber>
    </alternativeName>
    <alternativeName>
        <fullName evidence="1">Protein uridylyltransferase YdiU</fullName>
        <ecNumber evidence="1">2.7.7.-</ecNumber>
    </alternativeName>
</protein>
<organism>
    <name type="scientific">Escherichia coli (strain K12 / DH10B)</name>
    <dbReference type="NCBI Taxonomy" id="316385"/>
    <lineage>
        <taxon>Bacteria</taxon>
        <taxon>Pseudomonadati</taxon>
        <taxon>Pseudomonadota</taxon>
        <taxon>Gammaproteobacteria</taxon>
        <taxon>Enterobacterales</taxon>
        <taxon>Enterobacteriaceae</taxon>
        <taxon>Escherichia</taxon>
    </lineage>
</organism>
<gene>
    <name evidence="1" type="primary">ydiU</name>
    <name evidence="1" type="synonym">selO</name>
    <name type="ordered locus">ECDH10B_1842</name>
</gene>
<dbReference type="EC" id="2.7.7.-" evidence="1"/>
<dbReference type="EC" id="2.7.7.108" evidence="1"/>
<dbReference type="EMBL" id="CP000948">
    <property type="protein sequence ID" value="ACB02907.1"/>
    <property type="molecule type" value="Genomic_DNA"/>
</dbReference>
<dbReference type="RefSeq" id="WP_000175703.1">
    <property type="nucleotide sequence ID" value="NC_010473.1"/>
</dbReference>
<dbReference type="SMR" id="B1XG13"/>
<dbReference type="KEGG" id="ecd:ECDH10B_1842"/>
<dbReference type="HOGENOM" id="CLU_010245_4_1_6"/>
<dbReference type="GO" id="GO:0070733">
    <property type="term" value="F:AMPylase activity"/>
    <property type="evidence" value="ECO:0007669"/>
    <property type="project" value="TreeGrafter"/>
</dbReference>
<dbReference type="GO" id="GO:0005524">
    <property type="term" value="F:ATP binding"/>
    <property type="evidence" value="ECO:0007669"/>
    <property type="project" value="UniProtKB-UniRule"/>
</dbReference>
<dbReference type="GO" id="GO:0000287">
    <property type="term" value="F:magnesium ion binding"/>
    <property type="evidence" value="ECO:0007669"/>
    <property type="project" value="UniProtKB-UniRule"/>
</dbReference>
<dbReference type="HAMAP" id="MF_00692">
    <property type="entry name" value="YdiU_SelO"/>
    <property type="match status" value="1"/>
</dbReference>
<dbReference type="InterPro" id="IPR054838">
    <property type="entry name" value="adnlytase_SelO"/>
</dbReference>
<dbReference type="InterPro" id="IPR003846">
    <property type="entry name" value="SelO"/>
</dbReference>
<dbReference type="NCBIfam" id="NF040880">
    <property type="entry name" value="adnlytase_SelO"/>
    <property type="match status" value="1"/>
</dbReference>
<dbReference type="NCBIfam" id="NF000658">
    <property type="entry name" value="PRK00029.1"/>
    <property type="match status" value="1"/>
</dbReference>
<dbReference type="PANTHER" id="PTHR32057">
    <property type="entry name" value="PROTEIN ADENYLYLTRANSFERASE SELO, MITOCHONDRIAL"/>
    <property type="match status" value="1"/>
</dbReference>
<dbReference type="PANTHER" id="PTHR32057:SF14">
    <property type="entry name" value="PROTEIN ADENYLYLTRANSFERASE SELO, MITOCHONDRIAL"/>
    <property type="match status" value="1"/>
</dbReference>
<dbReference type="Pfam" id="PF02696">
    <property type="entry name" value="SelO"/>
    <property type="match status" value="1"/>
</dbReference>
<proteinExistence type="inferred from homology"/>
<name>SELO_ECODH</name>
<feature type="chain" id="PRO_1000132108" description="Protein nucleotidyltransferase YdiU">
    <location>
        <begin position="1"/>
        <end position="478"/>
    </location>
</feature>
<feature type="active site" description="Proton acceptor" evidence="1">
    <location>
        <position position="246"/>
    </location>
</feature>
<feature type="binding site" evidence="1">
    <location>
        <position position="84"/>
    </location>
    <ligand>
        <name>ATP</name>
        <dbReference type="ChEBI" id="CHEBI:30616"/>
    </ligand>
</feature>
<feature type="binding site" evidence="1">
    <location>
        <position position="86"/>
    </location>
    <ligand>
        <name>ATP</name>
        <dbReference type="ChEBI" id="CHEBI:30616"/>
    </ligand>
</feature>
<feature type="binding site" evidence="1">
    <location>
        <position position="87"/>
    </location>
    <ligand>
        <name>ATP</name>
        <dbReference type="ChEBI" id="CHEBI:30616"/>
    </ligand>
</feature>
<feature type="binding site" evidence="1">
    <location>
        <position position="107"/>
    </location>
    <ligand>
        <name>ATP</name>
        <dbReference type="ChEBI" id="CHEBI:30616"/>
    </ligand>
</feature>
<feature type="binding site" evidence="1">
    <location>
        <position position="119"/>
    </location>
    <ligand>
        <name>ATP</name>
        <dbReference type="ChEBI" id="CHEBI:30616"/>
    </ligand>
</feature>
<feature type="binding site" evidence="1">
    <location>
        <position position="120"/>
    </location>
    <ligand>
        <name>ATP</name>
        <dbReference type="ChEBI" id="CHEBI:30616"/>
    </ligand>
</feature>
<feature type="binding site" evidence="1">
    <location>
        <position position="170"/>
    </location>
    <ligand>
        <name>ATP</name>
        <dbReference type="ChEBI" id="CHEBI:30616"/>
    </ligand>
</feature>
<feature type="binding site" evidence="1">
    <location>
        <position position="177"/>
    </location>
    <ligand>
        <name>ATP</name>
        <dbReference type="ChEBI" id="CHEBI:30616"/>
    </ligand>
</feature>
<feature type="binding site" evidence="1">
    <location>
        <position position="247"/>
    </location>
    <ligand>
        <name>Mg(2+)</name>
        <dbReference type="ChEBI" id="CHEBI:18420"/>
    </ligand>
</feature>
<feature type="binding site" evidence="1">
    <location>
        <position position="256"/>
    </location>
    <ligand>
        <name>ATP</name>
        <dbReference type="ChEBI" id="CHEBI:30616"/>
    </ligand>
</feature>
<feature type="binding site" evidence="1">
    <location>
        <position position="256"/>
    </location>
    <ligand>
        <name>Mg(2+)</name>
        <dbReference type="ChEBI" id="CHEBI:18420"/>
    </ligand>
</feature>
<reference key="1">
    <citation type="journal article" date="2008" name="J. Bacteriol.">
        <title>The complete genome sequence of Escherichia coli DH10B: insights into the biology of a laboratory workhorse.</title>
        <authorList>
            <person name="Durfee T."/>
            <person name="Nelson R."/>
            <person name="Baldwin S."/>
            <person name="Plunkett G. III"/>
            <person name="Burland V."/>
            <person name="Mau B."/>
            <person name="Petrosino J.F."/>
            <person name="Qin X."/>
            <person name="Muzny D.M."/>
            <person name="Ayele M."/>
            <person name="Gibbs R.A."/>
            <person name="Csorgo B."/>
            <person name="Posfai G."/>
            <person name="Weinstock G.M."/>
            <person name="Blattner F.R."/>
        </authorList>
    </citation>
    <scope>NUCLEOTIDE SEQUENCE [LARGE SCALE GENOMIC DNA]</scope>
    <source>
        <strain>K12 / DH10B</strain>
    </source>
</reference>
<accession>B1XG13</accession>
<evidence type="ECO:0000255" key="1">
    <source>
        <dbReference type="HAMAP-Rule" id="MF_00692"/>
    </source>
</evidence>
<comment type="function">
    <text evidence="1">Nucleotidyltransferase involved in the post-translational modification of proteins. It can catalyze the addition of adenosine monophosphate (AMP) or uridine monophosphate (UMP) to a protein, resulting in modifications known as AMPylation and UMPylation.</text>
</comment>
<comment type="catalytic activity">
    <reaction evidence="1">
        <text>L-seryl-[protein] + ATP = 3-O-(5'-adenylyl)-L-seryl-[protein] + diphosphate</text>
        <dbReference type="Rhea" id="RHEA:58120"/>
        <dbReference type="Rhea" id="RHEA-COMP:9863"/>
        <dbReference type="Rhea" id="RHEA-COMP:15073"/>
        <dbReference type="ChEBI" id="CHEBI:29999"/>
        <dbReference type="ChEBI" id="CHEBI:30616"/>
        <dbReference type="ChEBI" id="CHEBI:33019"/>
        <dbReference type="ChEBI" id="CHEBI:142516"/>
        <dbReference type="EC" id="2.7.7.108"/>
    </reaction>
</comment>
<comment type="catalytic activity">
    <reaction evidence="1">
        <text>L-threonyl-[protein] + ATP = 3-O-(5'-adenylyl)-L-threonyl-[protein] + diphosphate</text>
        <dbReference type="Rhea" id="RHEA:54292"/>
        <dbReference type="Rhea" id="RHEA-COMP:11060"/>
        <dbReference type="Rhea" id="RHEA-COMP:13847"/>
        <dbReference type="ChEBI" id="CHEBI:30013"/>
        <dbReference type="ChEBI" id="CHEBI:30616"/>
        <dbReference type="ChEBI" id="CHEBI:33019"/>
        <dbReference type="ChEBI" id="CHEBI:138113"/>
        <dbReference type="EC" id="2.7.7.108"/>
    </reaction>
</comment>
<comment type="catalytic activity">
    <reaction evidence="1">
        <text>L-tyrosyl-[protein] + ATP = O-(5'-adenylyl)-L-tyrosyl-[protein] + diphosphate</text>
        <dbReference type="Rhea" id="RHEA:54288"/>
        <dbReference type="Rhea" id="RHEA-COMP:10136"/>
        <dbReference type="Rhea" id="RHEA-COMP:13846"/>
        <dbReference type="ChEBI" id="CHEBI:30616"/>
        <dbReference type="ChEBI" id="CHEBI:33019"/>
        <dbReference type="ChEBI" id="CHEBI:46858"/>
        <dbReference type="ChEBI" id="CHEBI:83624"/>
        <dbReference type="EC" id="2.7.7.108"/>
    </reaction>
</comment>
<comment type="catalytic activity">
    <reaction evidence="1">
        <text>L-histidyl-[protein] + UTP = N(tele)-(5'-uridylyl)-L-histidyl-[protein] + diphosphate</text>
        <dbReference type="Rhea" id="RHEA:83891"/>
        <dbReference type="Rhea" id="RHEA-COMP:9745"/>
        <dbReference type="Rhea" id="RHEA-COMP:20239"/>
        <dbReference type="ChEBI" id="CHEBI:29979"/>
        <dbReference type="ChEBI" id="CHEBI:33019"/>
        <dbReference type="ChEBI" id="CHEBI:46398"/>
        <dbReference type="ChEBI" id="CHEBI:233474"/>
    </reaction>
</comment>
<comment type="catalytic activity">
    <reaction evidence="1">
        <text>L-seryl-[protein] + UTP = O-(5'-uridylyl)-L-seryl-[protein] + diphosphate</text>
        <dbReference type="Rhea" id="RHEA:64604"/>
        <dbReference type="Rhea" id="RHEA-COMP:9863"/>
        <dbReference type="Rhea" id="RHEA-COMP:16635"/>
        <dbReference type="ChEBI" id="CHEBI:29999"/>
        <dbReference type="ChEBI" id="CHEBI:33019"/>
        <dbReference type="ChEBI" id="CHEBI:46398"/>
        <dbReference type="ChEBI" id="CHEBI:156051"/>
    </reaction>
</comment>
<comment type="catalytic activity">
    <reaction evidence="1">
        <text>L-tyrosyl-[protein] + UTP = O-(5'-uridylyl)-L-tyrosyl-[protein] + diphosphate</text>
        <dbReference type="Rhea" id="RHEA:83887"/>
        <dbReference type="Rhea" id="RHEA-COMP:10136"/>
        <dbReference type="Rhea" id="RHEA-COMP:20238"/>
        <dbReference type="ChEBI" id="CHEBI:33019"/>
        <dbReference type="ChEBI" id="CHEBI:46398"/>
        <dbReference type="ChEBI" id="CHEBI:46858"/>
        <dbReference type="ChEBI" id="CHEBI:90602"/>
    </reaction>
</comment>
<comment type="cofactor">
    <cofactor evidence="1">
        <name>Mg(2+)</name>
        <dbReference type="ChEBI" id="CHEBI:18420"/>
    </cofactor>
    <cofactor evidence="1">
        <name>Mn(2+)</name>
        <dbReference type="ChEBI" id="CHEBI:29035"/>
    </cofactor>
</comment>
<comment type="similarity">
    <text evidence="1">Belongs to the SELO family.</text>
</comment>
<sequence>MTLSFVTRWRDELPETYTALSPTPLNNARLIWHNTELANTLSIPSSLFKNGAGVWGGEALLPGMSPLAQVYSGHQFGVWAGQLGDGRGILLGEQLLADGTTMDWHLKGAGLTPYSRMGDGRAVLRSTIRESLASEAMHYLGIPTTRALSIVTSDSPVYRETAEPGAMLMRVAPSHLRFGHFEHFYYRRESEKVRQLADFAIRHYWSHLADDEDKYRLWFSDVVARTASLIAQWQTVGFAHGVMNTDNMSLLGLTLDYGPFGFLDDYEPGFICNHSDHQGRYSFDNQPAVALWNLQRLAQTLSPFVAVDALNEALDSYQQVLLTHYGERMRQKLGFMTEQKEDNALLNELFSLMARERSDYTRTFRMLSLTEQHSAASPLRDEFIDRAAFDDWFARYRGRLQQDEVSDSERQQLMQSVNPALVLRNWLAQRAIEAAEKGDMTELHRLHEALRNPFSDRDDDYVSRPPDWGKRLEVSCSS</sequence>
<keyword id="KW-0067">ATP-binding</keyword>
<keyword id="KW-0460">Magnesium</keyword>
<keyword id="KW-0464">Manganese</keyword>
<keyword id="KW-0479">Metal-binding</keyword>
<keyword id="KW-0547">Nucleotide-binding</keyword>
<keyword id="KW-0548">Nucleotidyltransferase</keyword>
<keyword id="KW-0808">Transferase</keyword>